<protein>
    <recommendedName>
        <fullName evidence="1">Shikimate dehydrogenase (NADP(+))</fullName>
        <shortName evidence="1">SDH</shortName>
        <ecNumber evidence="1">1.1.1.25</ecNumber>
    </recommendedName>
</protein>
<feature type="chain" id="PRO_1000100111" description="Shikimate dehydrogenase (NADP(+))">
    <location>
        <begin position="1"/>
        <end position="272"/>
    </location>
</feature>
<feature type="active site" description="Proton acceptor" evidence="1">
    <location>
        <position position="65"/>
    </location>
</feature>
<feature type="binding site" evidence="1">
    <location>
        <begin position="14"/>
        <end position="16"/>
    </location>
    <ligand>
        <name>shikimate</name>
        <dbReference type="ChEBI" id="CHEBI:36208"/>
    </ligand>
</feature>
<feature type="binding site" evidence="1">
    <location>
        <position position="61"/>
    </location>
    <ligand>
        <name>shikimate</name>
        <dbReference type="ChEBI" id="CHEBI:36208"/>
    </ligand>
</feature>
<feature type="binding site" evidence="1">
    <location>
        <position position="102"/>
    </location>
    <ligand>
        <name>shikimate</name>
        <dbReference type="ChEBI" id="CHEBI:36208"/>
    </ligand>
</feature>
<feature type="binding site" evidence="1">
    <location>
        <begin position="127"/>
        <end position="131"/>
    </location>
    <ligand>
        <name>NADP(+)</name>
        <dbReference type="ChEBI" id="CHEBI:58349"/>
    </ligand>
</feature>
<feature type="binding site" evidence="1">
    <location>
        <begin position="151"/>
        <end position="156"/>
    </location>
    <ligand>
        <name>NADP(+)</name>
        <dbReference type="ChEBI" id="CHEBI:58349"/>
    </ligand>
</feature>
<feature type="binding site" evidence="1">
    <location>
        <position position="215"/>
    </location>
    <ligand>
        <name>NADP(+)</name>
        <dbReference type="ChEBI" id="CHEBI:58349"/>
    </ligand>
</feature>
<feature type="binding site" evidence="1">
    <location>
        <position position="217"/>
    </location>
    <ligand>
        <name>shikimate</name>
        <dbReference type="ChEBI" id="CHEBI:36208"/>
    </ligand>
</feature>
<feature type="binding site" evidence="1">
    <location>
        <position position="239"/>
    </location>
    <ligand>
        <name>NADP(+)</name>
        <dbReference type="ChEBI" id="CHEBI:58349"/>
    </ligand>
</feature>
<name>AROE_COXB2</name>
<organism>
    <name type="scientific">Coxiella burnetii (strain CbuG_Q212)</name>
    <name type="common">Coxiella burnetii (strain Q212)</name>
    <dbReference type="NCBI Taxonomy" id="434923"/>
    <lineage>
        <taxon>Bacteria</taxon>
        <taxon>Pseudomonadati</taxon>
        <taxon>Pseudomonadota</taxon>
        <taxon>Gammaproteobacteria</taxon>
        <taxon>Legionellales</taxon>
        <taxon>Coxiellaceae</taxon>
        <taxon>Coxiella</taxon>
    </lineage>
</organism>
<evidence type="ECO:0000255" key="1">
    <source>
        <dbReference type="HAMAP-Rule" id="MF_00222"/>
    </source>
</evidence>
<gene>
    <name evidence="1" type="primary">aroE</name>
    <name type="ordered locus">CbuG_0279</name>
</gene>
<sequence>MDKYAVIGNPVEHSLSPVIFQAFEKQTNHSFDYLKIKAPVNGFAAAVKKFHDEGGKGANITLPFKEEAYQLADKRSQEANEAHVASALQFREDGTIYAVNYDGLGLVQDLTRNHNITLTQKSILIVGAGGATRGILGPLLNAAPEKIVIVNRTPSKAHALAKIFHLRGEIQGGGFDELEPMRYDVIIHATSLGHQGKFPPLPDGLIGSQSCCYDLSYGKIASPFLQWAKDQGAKYNFDGLGMLVEHNAAVFYLWFGIYPDTNPVIEMLQAHL</sequence>
<reference key="1">
    <citation type="journal article" date="2009" name="Infect. Immun.">
        <title>Comparative genomics reveal extensive transposon-mediated genomic plasticity and diversity among potential effector proteins within the genus Coxiella.</title>
        <authorList>
            <person name="Beare P.A."/>
            <person name="Unsworth N."/>
            <person name="Andoh M."/>
            <person name="Voth D.E."/>
            <person name="Omsland A."/>
            <person name="Gilk S.D."/>
            <person name="Williams K.P."/>
            <person name="Sobral B.W."/>
            <person name="Kupko J.J. III"/>
            <person name="Porcella S.F."/>
            <person name="Samuel J.E."/>
            <person name="Heinzen R.A."/>
        </authorList>
    </citation>
    <scope>NUCLEOTIDE SEQUENCE [LARGE SCALE GENOMIC DNA]</scope>
    <source>
        <strain>CbuG_Q212</strain>
    </source>
</reference>
<accession>B6J3J2</accession>
<proteinExistence type="inferred from homology"/>
<comment type="function">
    <text evidence="1">Involved in the biosynthesis of the chorismate, which leads to the biosynthesis of aromatic amino acids. Catalyzes the reversible NADPH linked reduction of 3-dehydroshikimate (DHSA) to yield shikimate (SA).</text>
</comment>
<comment type="catalytic activity">
    <reaction evidence="1">
        <text>shikimate + NADP(+) = 3-dehydroshikimate + NADPH + H(+)</text>
        <dbReference type="Rhea" id="RHEA:17737"/>
        <dbReference type="ChEBI" id="CHEBI:15378"/>
        <dbReference type="ChEBI" id="CHEBI:16630"/>
        <dbReference type="ChEBI" id="CHEBI:36208"/>
        <dbReference type="ChEBI" id="CHEBI:57783"/>
        <dbReference type="ChEBI" id="CHEBI:58349"/>
        <dbReference type="EC" id="1.1.1.25"/>
    </reaction>
</comment>
<comment type="pathway">
    <text evidence="1">Metabolic intermediate biosynthesis; chorismate biosynthesis; chorismate from D-erythrose 4-phosphate and phosphoenolpyruvate: step 4/7.</text>
</comment>
<comment type="subunit">
    <text evidence="1">Homodimer.</text>
</comment>
<comment type="similarity">
    <text evidence="1">Belongs to the shikimate dehydrogenase family.</text>
</comment>
<keyword id="KW-0028">Amino-acid biosynthesis</keyword>
<keyword id="KW-0057">Aromatic amino acid biosynthesis</keyword>
<keyword id="KW-0521">NADP</keyword>
<keyword id="KW-0560">Oxidoreductase</keyword>
<dbReference type="EC" id="1.1.1.25" evidence="1"/>
<dbReference type="EMBL" id="CP001019">
    <property type="protein sequence ID" value="ACJ17718.1"/>
    <property type="molecule type" value="Genomic_DNA"/>
</dbReference>
<dbReference type="RefSeq" id="WP_010957324.1">
    <property type="nucleotide sequence ID" value="NC_011527.1"/>
</dbReference>
<dbReference type="SMR" id="B6J3J2"/>
<dbReference type="KEGG" id="cbg:CbuG_0279"/>
<dbReference type="HOGENOM" id="CLU_044063_2_1_6"/>
<dbReference type="UniPathway" id="UPA00053">
    <property type="reaction ID" value="UER00087"/>
</dbReference>
<dbReference type="GO" id="GO:0005829">
    <property type="term" value="C:cytosol"/>
    <property type="evidence" value="ECO:0007669"/>
    <property type="project" value="TreeGrafter"/>
</dbReference>
<dbReference type="GO" id="GO:0050661">
    <property type="term" value="F:NADP binding"/>
    <property type="evidence" value="ECO:0007669"/>
    <property type="project" value="InterPro"/>
</dbReference>
<dbReference type="GO" id="GO:0004764">
    <property type="term" value="F:shikimate 3-dehydrogenase (NADP+) activity"/>
    <property type="evidence" value="ECO:0007669"/>
    <property type="project" value="UniProtKB-UniRule"/>
</dbReference>
<dbReference type="GO" id="GO:0008652">
    <property type="term" value="P:amino acid biosynthetic process"/>
    <property type="evidence" value="ECO:0007669"/>
    <property type="project" value="UniProtKB-KW"/>
</dbReference>
<dbReference type="GO" id="GO:0009073">
    <property type="term" value="P:aromatic amino acid family biosynthetic process"/>
    <property type="evidence" value="ECO:0007669"/>
    <property type="project" value="UniProtKB-KW"/>
</dbReference>
<dbReference type="GO" id="GO:0009423">
    <property type="term" value="P:chorismate biosynthetic process"/>
    <property type="evidence" value="ECO:0007669"/>
    <property type="project" value="UniProtKB-UniRule"/>
</dbReference>
<dbReference type="GO" id="GO:0019632">
    <property type="term" value="P:shikimate metabolic process"/>
    <property type="evidence" value="ECO:0007669"/>
    <property type="project" value="InterPro"/>
</dbReference>
<dbReference type="CDD" id="cd01065">
    <property type="entry name" value="NAD_bind_Shikimate_DH"/>
    <property type="match status" value="1"/>
</dbReference>
<dbReference type="FunFam" id="3.40.50.10860:FF:000006">
    <property type="entry name" value="Shikimate dehydrogenase (NADP(+))"/>
    <property type="match status" value="1"/>
</dbReference>
<dbReference type="FunFam" id="3.40.50.720:FF:000104">
    <property type="entry name" value="Shikimate dehydrogenase (NADP(+))"/>
    <property type="match status" value="1"/>
</dbReference>
<dbReference type="Gene3D" id="3.40.50.10860">
    <property type="entry name" value="Leucine Dehydrogenase, chain A, domain 1"/>
    <property type="match status" value="1"/>
</dbReference>
<dbReference type="Gene3D" id="3.40.50.720">
    <property type="entry name" value="NAD(P)-binding Rossmann-like Domain"/>
    <property type="match status" value="1"/>
</dbReference>
<dbReference type="HAMAP" id="MF_00222">
    <property type="entry name" value="Shikimate_DH_AroE"/>
    <property type="match status" value="1"/>
</dbReference>
<dbReference type="InterPro" id="IPR046346">
    <property type="entry name" value="Aminoacid_DH-like_N_sf"/>
</dbReference>
<dbReference type="InterPro" id="IPR036291">
    <property type="entry name" value="NAD(P)-bd_dom_sf"/>
</dbReference>
<dbReference type="InterPro" id="IPR011342">
    <property type="entry name" value="Shikimate_DH"/>
</dbReference>
<dbReference type="InterPro" id="IPR013708">
    <property type="entry name" value="Shikimate_DH-bd_N"/>
</dbReference>
<dbReference type="InterPro" id="IPR022893">
    <property type="entry name" value="Shikimate_DH_fam"/>
</dbReference>
<dbReference type="InterPro" id="IPR006151">
    <property type="entry name" value="Shikm_DH/Glu-tRNA_Rdtase"/>
</dbReference>
<dbReference type="NCBIfam" id="TIGR00507">
    <property type="entry name" value="aroE"/>
    <property type="match status" value="1"/>
</dbReference>
<dbReference type="NCBIfam" id="NF001310">
    <property type="entry name" value="PRK00258.1-2"/>
    <property type="match status" value="1"/>
</dbReference>
<dbReference type="PANTHER" id="PTHR21089:SF1">
    <property type="entry name" value="BIFUNCTIONAL 3-DEHYDROQUINATE DEHYDRATASE_SHIKIMATE DEHYDROGENASE, CHLOROPLASTIC"/>
    <property type="match status" value="1"/>
</dbReference>
<dbReference type="PANTHER" id="PTHR21089">
    <property type="entry name" value="SHIKIMATE DEHYDROGENASE"/>
    <property type="match status" value="1"/>
</dbReference>
<dbReference type="Pfam" id="PF01488">
    <property type="entry name" value="Shikimate_DH"/>
    <property type="match status" value="1"/>
</dbReference>
<dbReference type="Pfam" id="PF08501">
    <property type="entry name" value="Shikimate_dh_N"/>
    <property type="match status" value="1"/>
</dbReference>
<dbReference type="SUPFAM" id="SSF53223">
    <property type="entry name" value="Aminoacid dehydrogenase-like, N-terminal domain"/>
    <property type="match status" value="1"/>
</dbReference>
<dbReference type="SUPFAM" id="SSF51735">
    <property type="entry name" value="NAD(P)-binding Rossmann-fold domains"/>
    <property type="match status" value="1"/>
</dbReference>